<sequence length="500" mass="58248">MLKRRLEFFFLYMMLIGAYVIWFFPVSRLEFYGGLLCYISIILFSIYSLILENRTSQHTLLWIHILVFFPIVGYVFYLFSGQLYVKGKLFKTKRMYNREKLRKLFDKEETPEVTGLKDNQERFFTYSIRAAHMNINTKSNIKVLKNGEETFPDIFKAMRKAESYIHIEYYMFKSDMLGRGMMDIMMEKARQGVEVRFLYDAAGSMKLARRDIMRMKQAGVDIVPFSPLKYGFFNQKLNFRNHRKIVIIDGKTGFVGGLNVGKEYISRDPYIGFWRDTHLRLEGEIVQTLHAIFMLDWEYVSNEVLIDQEEYNTPVPVEGGGIYQIVATGPDMKESMSDLYYEMISSAQKSIWIATPYFVPNESIRTALKAAATKGVEVRVMVPEKNDSFLTQYASRSYFPELLLEGIEVYSYQKGFMHQKVMIIDGDLASVGTANMDMRSFQLNFEVNVFFTDAEAIRTLEAHFEEDMQESEKLSPVGFYKRGVADRTKESFARLFSGVL</sequence>
<name>CLS1_BACSU</name>
<gene>
    <name type="primary">ywiE</name>
    <name type="ordered locus">BSU37240</name>
</gene>
<protein>
    <recommendedName>
        <fullName>Probable cardiolipin synthase YwiE</fullName>
        <shortName evidence="1">CL synthase 1</shortName>
        <ecNumber evidence="1">2.7.8.-</ecNumber>
    </recommendedName>
</protein>
<comment type="function">
    <text evidence="1">Catalyzes the reversible phosphatidyl group transfer from one phosphatidylglycerol molecule to another to form cardiolipin (CL) (diphosphatidylglycerol) and glycerol (By similarity). May have a role in the heat shock response since the level of the transcript of ywiE increases after a heat shock.</text>
</comment>
<comment type="catalytic activity">
    <reaction evidence="1">
        <text>2 a 1,2-diacyl-sn-glycero-3-phospho-(1'-sn-glycerol) = a cardiolipin + glycerol</text>
        <dbReference type="Rhea" id="RHEA:31451"/>
        <dbReference type="ChEBI" id="CHEBI:17754"/>
        <dbReference type="ChEBI" id="CHEBI:62237"/>
        <dbReference type="ChEBI" id="CHEBI:64716"/>
    </reaction>
</comment>
<comment type="subcellular location">
    <subcellularLocation>
        <location evidence="1">Cell membrane</location>
        <topology evidence="1">Multi-pass membrane protein</topology>
    </subcellularLocation>
</comment>
<comment type="induction">
    <text evidence="2">By heat shock.</text>
</comment>
<comment type="similarity">
    <text evidence="1">Belongs to the phospholipase D family. Cardiolipin synthase subfamily.</text>
</comment>
<evidence type="ECO:0000255" key="1">
    <source>
        <dbReference type="HAMAP-Rule" id="MF_01916"/>
    </source>
</evidence>
<evidence type="ECO:0000269" key="2">
    <source>
    </source>
</evidence>
<proteinExistence type="evidence at transcript level"/>
<accession>P45860</accession>
<organism>
    <name type="scientific">Bacillus subtilis (strain 168)</name>
    <dbReference type="NCBI Taxonomy" id="224308"/>
    <lineage>
        <taxon>Bacteria</taxon>
        <taxon>Bacillati</taxon>
        <taxon>Bacillota</taxon>
        <taxon>Bacilli</taxon>
        <taxon>Bacillales</taxon>
        <taxon>Bacillaceae</taxon>
        <taxon>Bacillus</taxon>
    </lineage>
</organism>
<dbReference type="EC" id="2.7.8.-" evidence="1"/>
<dbReference type="EMBL" id="Z49884">
    <property type="protein sequence ID" value="CAA90049.1"/>
    <property type="molecule type" value="Genomic_DNA"/>
</dbReference>
<dbReference type="EMBL" id="Z49782">
    <property type="protein sequence ID" value="CAA89861.1"/>
    <property type="molecule type" value="Genomic_DNA"/>
</dbReference>
<dbReference type="EMBL" id="AL009126">
    <property type="protein sequence ID" value="CAB15752.1"/>
    <property type="molecule type" value="Genomic_DNA"/>
</dbReference>
<dbReference type="PIR" id="S60089">
    <property type="entry name" value="S60089"/>
</dbReference>
<dbReference type="SMR" id="P45860"/>
<dbReference type="FunCoup" id="P45860">
    <property type="interactions" value="69"/>
</dbReference>
<dbReference type="IntAct" id="P45860">
    <property type="interactions" value="7"/>
</dbReference>
<dbReference type="STRING" id="224308.BSU37240"/>
<dbReference type="PaxDb" id="224308-BSU37240"/>
<dbReference type="DNASU" id="938453"/>
<dbReference type="EnsemblBacteria" id="CAB15752">
    <property type="protein sequence ID" value="CAB15752"/>
    <property type="gene ID" value="BSU_37240"/>
</dbReference>
<dbReference type="GeneID" id="938453"/>
<dbReference type="KEGG" id="bsu:BSU37240"/>
<dbReference type="PATRIC" id="fig|224308.179.peg.4034"/>
<dbReference type="eggNOG" id="COG1502">
    <property type="taxonomic scope" value="Bacteria"/>
</dbReference>
<dbReference type="InParanoid" id="P45860"/>
<dbReference type="OrthoDB" id="9762009at2"/>
<dbReference type="PhylomeDB" id="P45860"/>
<dbReference type="BioCyc" id="BSUB:BSU37240-MONOMER"/>
<dbReference type="Proteomes" id="UP000001570">
    <property type="component" value="Chromosome"/>
</dbReference>
<dbReference type="GO" id="GO:0005886">
    <property type="term" value="C:plasma membrane"/>
    <property type="evidence" value="ECO:0007669"/>
    <property type="project" value="UniProtKB-SubCell"/>
</dbReference>
<dbReference type="GO" id="GO:0008808">
    <property type="term" value="F:cardiolipin synthase activity"/>
    <property type="evidence" value="ECO:0007669"/>
    <property type="project" value="InterPro"/>
</dbReference>
<dbReference type="GO" id="GO:0032049">
    <property type="term" value="P:cardiolipin biosynthetic process"/>
    <property type="evidence" value="ECO:0007669"/>
    <property type="project" value="InterPro"/>
</dbReference>
<dbReference type="CDD" id="cd09110">
    <property type="entry name" value="PLDc_CLS_1"/>
    <property type="match status" value="1"/>
</dbReference>
<dbReference type="CDD" id="cd09112">
    <property type="entry name" value="PLDc_CLS_2"/>
    <property type="match status" value="1"/>
</dbReference>
<dbReference type="FunFam" id="3.30.870.10:FF:000014">
    <property type="entry name" value="Cardiolipin synthase"/>
    <property type="match status" value="1"/>
</dbReference>
<dbReference type="Gene3D" id="3.30.870.10">
    <property type="entry name" value="Endonuclease Chain A"/>
    <property type="match status" value="2"/>
</dbReference>
<dbReference type="HAMAP" id="MF_01916">
    <property type="entry name" value="Cardiolipin_synth_Cls"/>
    <property type="match status" value="1"/>
</dbReference>
<dbReference type="InterPro" id="IPR030874">
    <property type="entry name" value="Cardiolipin_synth_Firmi"/>
</dbReference>
<dbReference type="InterPro" id="IPR022924">
    <property type="entry name" value="Cardiolipin_synthase"/>
</dbReference>
<dbReference type="InterPro" id="IPR027379">
    <property type="entry name" value="CLS_N"/>
</dbReference>
<dbReference type="InterPro" id="IPR025202">
    <property type="entry name" value="PLD-like_dom"/>
</dbReference>
<dbReference type="InterPro" id="IPR001736">
    <property type="entry name" value="PLipase_D/transphosphatidylase"/>
</dbReference>
<dbReference type="NCBIfam" id="TIGR04265">
    <property type="entry name" value="bac_cardiolipin"/>
    <property type="match status" value="1"/>
</dbReference>
<dbReference type="PANTHER" id="PTHR21248">
    <property type="entry name" value="CARDIOLIPIN SYNTHASE"/>
    <property type="match status" value="1"/>
</dbReference>
<dbReference type="PANTHER" id="PTHR21248:SF20">
    <property type="entry name" value="CARDIOLIPIN SYNTHASE YWIE-RELATED"/>
    <property type="match status" value="1"/>
</dbReference>
<dbReference type="Pfam" id="PF13091">
    <property type="entry name" value="PLDc_2"/>
    <property type="match status" value="2"/>
</dbReference>
<dbReference type="Pfam" id="PF13396">
    <property type="entry name" value="PLDc_N"/>
    <property type="match status" value="1"/>
</dbReference>
<dbReference type="SMART" id="SM00155">
    <property type="entry name" value="PLDc"/>
    <property type="match status" value="2"/>
</dbReference>
<dbReference type="SUPFAM" id="SSF56024">
    <property type="entry name" value="Phospholipase D/nuclease"/>
    <property type="match status" value="2"/>
</dbReference>
<dbReference type="PROSITE" id="PS50035">
    <property type="entry name" value="PLD"/>
    <property type="match status" value="2"/>
</dbReference>
<feature type="chain" id="PRO_0000201247" description="Probable cardiolipin synthase YwiE">
    <location>
        <begin position="1"/>
        <end position="500"/>
    </location>
</feature>
<feature type="transmembrane region" description="Helical" evidence="1">
    <location>
        <begin position="6"/>
        <end position="26"/>
    </location>
</feature>
<feature type="transmembrane region" description="Helical" evidence="1">
    <location>
        <begin position="31"/>
        <end position="51"/>
    </location>
</feature>
<feature type="transmembrane region" description="Helical" evidence="1">
    <location>
        <begin position="59"/>
        <end position="79"/>
    </location>
</feature>
<feature type="domain" description="PLD phosphodiesterase 1" evidence="1">
    <location>
        <begin position="237"/>
        <end position="264"/>
    </location>
</feature>
<feature type="domain" description="PLD phosphodiesterase 2" evidence="1">
    <location>
        <begin position="413"/>
        <end position="440"/>
    </location>
</feature>
<feature type="active site" evidence="1">
    <location>
        <position position="242"/>
    </location>
</feature>
<feature type="active site" evidence="1">
    <location>
        <position position="244"/>
    </location>
</feature>
<feature type="active site" evidence="1">
    <location>
        <position position="249"/>
    </location>
</feature>
<feature type="active site" evidence="1">
    <location>
        <position position="418"/>
    </location>
</feature>
<feature type="active site" evidence="1">
    <location>
        <position position="420"/>
    </location>
</feature>
<feature type="active site" evidence="1">
    <location>
        <position position="425"/>
    </location>
</feature>
<keyword id="KW-1003">Cell membrane</keyword>
<keyword id="KW-0444">Lipid biosynthesis</keyword>
<keyword id="KW-0443">Lipid metabolism</keyword>
<keyword id="KW-0472">Membrane</keyword>
<keyword id="KW-0594">Phospholipid biosynthesis</keyword>
<keyword id="KW-1208">Phospholipid metabolism</keyword>
<keyword id="KW-1185">Reference proteome</keyword>
<keyword id="KW-0677">Repeat</keyword>
<keyword id="KW-0808">Transferase</keyword>
<keyword id="KW-0812">Transmembrane</keyword>
<keyword id="KW-1133">Transmembrane helix</keyword>
<reference key="1">
    <citation type="journal article" date="1995" name="EMBO J.">
        <title>Anaerobic transcription activation in Bacillus subtilis: identification of distinct FNR-dependent and -independent regulatory mechanisms.</title>
        <authorList>
            <person name="Cruz Ramos H."/>
            <person name="Boursier L."/>
            <person name="Moszer I."/>
            <person name="Kunst F."/>
            <person name="Danchin A."/>
            <person name="Glaser P."/>
        </authorList>
    </citation>
    <scope>NUCLEOTIDE SEQUENCE [GENOMIC DNA]</scope>
</reference>
<reference key="2">
    <citation type="journal article" date="1997" name="Microbiology">
        <title>The Bacillus subtilis genome from gerBC (311 degrees) to licR (334 degrees).</title>
        <authorList>
            <person name="Presecan E."/>
            <person name="Moszer I."/>
            <person name="Boursier L."/>
            <person name="Cruz Ramos H."/>
            <person name="De La Fuente V."/>
            <person name="Hullo M.-F."/>
            <person name="Lelong C."/>
            <person name="Schleich S."/>
            <person name="Sekowska A."/>
            <person name="Song B.H."/>
            <person name="Villani G."/>
            <person name="Kunst F."/>
            <person name="Danchin A."/>
            <person name="Glaser P."/>
        </authorList>
    </citation>
    <scope>NUCLEOTIDE SEQUENCE [GENOMIC DNA]</scope>
    <source>
        <strain>168</strain>
    </source>
</reference>
<reference key="3">
    <citation type="journal article" date="1997" name="Nature">
        <title>The complete genome sequence of the Gram-positive bacterium Bacillus subtilis.</title>
        <authorList>
            <person name="Kunst F."/>
            <person name="Ogasawara N."/>
            <person name="Moszer I."/>
            <person name="Albertini A.M."/>
            <person name="Alloni G."/>
            <person name="Azevedo V."/>
            <person name="Bertero M.G."/>
            <person name="Bessieres P."/>
            <person name="Bolotin A."/>
            <person name="Borchert S."/>
            <person name="Borriss R."/>
            <person name="Boursier L."/>
            <person name="Brans A."/>
            <person name="Braun M."/>
            <person name="Brignell S.C."/>
            <person name="Bron S."/>
            <person name="Brouillet S."/>
            <person name="Bruschi C.V."/>
            <person name="Caldwell B."/>
            <person name="Capuano V."/>
            <person name="Carter N.M."/>
            <person name="Choi S.-K."/>
            <person name="Codani J.-J."/>
            <person name="Connerton I.F."/>
            <person name="Cummings N.J."/>
            <person name="Daniel R.A."/>
            <person name="Denizot F."/>
            <person name="Devine K.M."/>
            <person name="Duesterhoeft A."/>
            <person name="Ehrlich S.D."/>
            <person name="Emmerson P.T."/>
            <person name="Entian K.-D."/>
            <person name="Errington J."/>
            <person name="Fabret C."/>
            <person name="Ferrari E."/>
            <person name="Foulger D."/>
            <person name="Fritz C."/>
            <person name="Fujita M."/>
            <person name="Fujita Y."/>
            <person name="Fuma S."/>
            <person name="Galizzi A."/>
            <person name="Galleron N."/>
            <person name="Ghim S.-Y."/>
            <person name="Glaser P."/>
            <person name="Goffeau A."/>
            <person name="Golightly E.J."/>
            <person name="Grandi G."/>
            <person name="Guiseppi G."/>
            <person name="Guy B.J."/>
            <person name="Haga K."/>
            <person name="Haiech J."/>
            <person name="Harwood C.R."/>
            <person name="Henaut A."/>
            <person name="Hilbert H."/>
            <person name="Holsappel S."/>
            <person name="Hosono S."/>
            <person name="Hullo M.-F."/>
            <person name="Itaya M."/>
            <person name="Jones L.-M."/>
            <person name="Joris B."/>
            <person name="Karamata D."/>
            <person name="Kasahara Y."/>
            <person name="Klaerr-Blanchard M."/>
            <person name="Klein C."/>
            <person name="Kobayashi Y."/>
            <person name="Koetter P."/>
            <person name="Koningstein G."/>
            <person name="Krogh S."/>
            <person name="Kumano M."/>
            <person name="Kurita K."/>
            <person name="Lapidus A."/>
            <person name="Lardinois S."/>
            <person name="Lauber J."/>
            <person name="Lazarevic V."/>
            <person name="Lee S.-M."/>
            <person name="Levine A."/>
            <person name="Liu H."/>
            <person name="Masuda S."/>
            <person name="Mauel C."/>
            <person name="Medigue C."/>
            <person name="Medina N."/>
            <person name="Mellado R.P."/>
            <person name="Mizuno M."/>
            <person name="Moestl D."/>
            <person name="Nakai S."/>
            <person name="Noback M."/>
            <person name="Noone D."/>
            <person name="O'Reilly M."/>
            <person name="Ogawa K."/>
            <person name="Ogiwara A."/>
            <person name="Oudega B."/>
            <person name="Park S.-H."/>
            <person name="Parro V."/>
            <person name="Pohl T.M."/>
            <person name="Portetelle D."/>
            <person name="Porwollik S."/>
            <person name="Prescott A.M."/>
            <person name="Presecan E."/>
            <person name="Pujic P."/>
            <person name="Purnelle B."/>
            <person name="Rapoport G."/>
            <person name="Rey M."/>
            <person name="Reynolds S."/>
            <person name="Rieger M."/>
            <person name="Rivolta C."/>
            <person name="Rocha E."/>
            <person name="Roche B."/>
            <person name="Rose M."/>
            <person name="Sadaie Y."/>
            <person name="Sato T."/>
            <person name="Scanlan E."/>
            <person name="Schleich S."/>
            <person name="Schroeter R."/>
            <person name="Scoffone F."/>
            <person name="Sekiguchi J."/>
            <person name="Sekowska A."/>
            <person name="Seror S.J."/>
            <person name="Serror P."/>
            <person name="Shin B.-S."/>
            <person name="Soldo B."/>
            <person name="Sorokin A."/>
            <person name="Tacconi E."/>
            <person name="Takagi T."/>
            <person name="Takahashi H."/>
            <person name="Takemaru K."/>
            <person name="Takeuchi M."/>
            <person name="Tamakoshi A."/>
            <person name="Tanaka T."/>
            <person name="Terpstra P."/>
            <person name="Tognoni A."/>
            <person name="Tosato V."/>
            <person name="Uchiyama S."/>
            <person name="Vandenbol M."/>
            <person name="Vannier F."/>
            <person name="Vassarotti A."/>
            <person name="Viari A."/>
            <person name="Wambutt R."/>
            <person name="Wedler E."/>
            <person name="Wedler H."/>
            <person name="Weitzenegger T."/>
            <person name="Winters P."/>
            <person name="Wipat A."/>
            <person name="Yamamoto H."/>
            <person name="Yamane K."/>
            <person name="Yasumoto K."/>
            <person name="Yata K."/>
            <person name="Yoshida K."/>
            <person name="Yoshikawa H.-F."/>
            <person name="Zumstein E."/>
            <person name="Yoshikawa H."/>
            <person name="Danchin A."/>
        </authorList>
    </citation>
    <scope>NUCLEOTIDE SEQUENCE [LARGE SCALE GENOMIC DNA]</scope>
    <source>
        <strain>168</strain>
    </source>
</reference>
<reference key="4">
    <citation type="journal article" date="2001" name="J. Bacteriol.">
        <title>Global transcriptional response of Bacillus subtilis to heat shock.</title>
        <authorList>
            <person name="Helmann J.D."/>
            <person name="Wu M.F."/>
            <person name="Kobel P.A."/>
            <person name="Gamo F.J."/>
            <person name="Wilson M."/>
            <person name="Morshedi M.M."/>
            <person name="Navre M."/>
            <person name="Paddon C."/>
        </authorList>
    </citation>
    <scope>PUTATIVE FUNCTION</scope>
    <scope>INDUCTION</scope>
</reference>